<dbReference type="EMBL" id="X69590">
    <property type="status" value="NOT_ANNOTATED_CDS"/>
    <property type="molecule type" value="Genomic_DNA"/>
</dbReference>
<dbReference type="EMBL" id="X73624">
    <property type="protein sequence ID" value="CAA52003.1"/>
    <property type="molecule type" value="Genomic_DNA"/>
</dbReference>
<dbReference type="EMBL" id="L42883">
    <property type="protein sequence ID" value="AAB36991.1"/>
    <property type="molecule type" value="Genomic_DNA"/>
</dbReference>
<dbReference type="PIR" id="S20543">
    <property type="entry name" value="S20543"/>
</dbReference>
<dbReference type="PDB" id="1F1M">
    <property type="method" value="X-ray"/>
    <property type="resolution" value="1.80 A"/>
    <property type="chains" value="A/B/C/D=41-203"/>
</dbReference>
<dbReference type="PDB" id="1G5Z">
    <property type="method" value="X-ray"/>
    <property type="resolution" value="2.51 A"/>
    <property type="chains" value="A=41-206"/>
</dbReference>
<dbReference type="PDBsum" id="1F1M"/>
<dbReference type="PDBsum" id="1G5Z"/>
<dbReference type="SMR" id="P0DW54"/>
<dbReference type="GO" id="GO:0009279">
    <property type="term" value="C:cell outer membrane"/>
    <property type="evidence" value="ECO:0007669"/>
    <property type="project" value="UniProtKB-SubCell"/>
</dbReference>
<dbReference type="GO" id="GO:0009986">
    <property type="term" value="C:cell surface"/>
    <property type="evidence" value="ECO:0007669"/>
    <property type="project" value="UniProtKB-SubCell"/>
</dbReference>
<dbReference type="Gene3D" id="1.20.120.240">
    <property type="entry name" value="Lipoprotein, type 6"/>
    <property type="match status" value="1"/>
</dbReference>
<dbReference type="InterPro" id="IPR001800">
    <property type="entry name" value="Lipoprotein_OspC"/>
</dbReference>
<dbReference type="InterPro" id="IPR036437">
    <property type="entry name" value="OspC-like_sf"/>
</dbReference>
<dbReference type="Pfam" id="PF01441">
    <property type="entry name" value="Lipoprotein_6"/>
    <property type="match status" value="1"/>
</dbReference>
<dbReference type="SUPFAM" id="SSF63515">
    <property type="entry name" value="Outer surface protein C (OspC)"/>
    <property type="match status" value="1"/>
</dbReference>
<dbReference type="PROSITE" id="PS51257">
    <property type="entry name" value="PROKAR_LIPOPROTEIN"/>
    <property type="match status" value="1"/>
</dbReference>
<organism>
    <name type="scientific">Borreliella burgdorferi</name>
    <name type="common">Lyme disease spirochete</name>
    <name type="synonym">Borrelia burgdorferi</name>
    <dbReference type="NCBI Taxonomy" id="139"/>
    <lineage>
        <taxon>Bacteria</taxon>
        <taxon>Pseudomonadati</taxon>
        <taxon>Spirochaetota</taxon>
        <taxon>Spirochaetia</taxon>
        <taxon>Spirochaetales</taxon>
        <taxon>Borreliaceae</taxon>
        <taxon>Borreliella</taxon>
    </lineage>
</organism>
<feature type="signal peptide" evidence="2">
    <location>
        <begin position="1"/>
        <end position="18"/>
    </location>
</feature>
<feature type="chain" id="PRO_0000018084" description="Outer surface protein C">
    <location>
        <begin position="19"/>
        <end position="212"/>
    </location>
</feature>
<feature type="lipid moiety-binding region" description="N-palmitoyl cysteine" evidence="2">
    <location>
        <position position="19"/>
    </location>
</feature>
<feature type="lipid moiety-binding region" description="S-diacylglycerol cysteine" evidence="2">
    <location>
        <position position="19"/>
    </location>
</feature>
<feature type="sequence conflict" description="In Ref. 1; X69590." evidence="13" ref="1">
    <original>F</original>
    <variation>T</variation>
    <location>
        <position position="56"/>
    </location>
</feature>
<keyword id="KW-0002">3D-structure</keyword>
<keyword id="KW-0998">Cell outer membrane</keyword>
<keyword id="KW-0449">Lipoprotein</keyword>
<keyword id="KW-0472">Membrane</keyword>
<keyword id="KW-0564">Palmitate</keyword>
<keyword id="KW-0614">Plasmid</keyword>
<keyword id="KW-0732">Signal</keyword>
<keyword id="KW-0843">Virulence</keyword>
<name>OSPC1_BORBG</name>
<gene>
    <name evidence="12" type="primary">ospC</name>
</gene>
<evidence type="ECO:0000250" key="1">
    <source>
        <dbReference type="UniProtKB" id="Q07337"/>
    </source>
</evidence>
<evidence type="ECO:0000255" key="2">
    <source>
        <dbReference type="PROSITE-ProRule" id="PRU00303"/>
    </source>
</evidence>
<evidence type="ECO:0000269" key="3">
    <source>
    </source>
</evidence>
<evidence type="ECO:0000269" key="4">
    <source>
    </source>
</evidence>
<evidence type="ECO:0000269" key="5">
    <source>
    </source>
</evidence>
<evidence type="ECO:0000269" key="6">
    <source>
    </source>
</evidence>
<evidence type="ECO:0000269" key="7">
    <source>
    </source>
</evidence>
<evidence type="ECO:0000269" key="8">
    <source>
    </source>
</evidence>
<evidence type="ECO:0000269" key="9">
    <source>
    </source>
</evidence>
<evidence type="ECO:0000269" key="10">
    <source>
    </source>
</evidence>
<evidence type="ECO:0000303" key="11">
    <source>
    </source>
</evidence>
<evidence type="ECO:0000303" key="12">
    <source>
    </source>
</evidence>
<evidence type="ECO:0000305" key="13"/>
<evidence type="ECO:0000305" key="14">
    <source>
    </source>
</evidence>
<evidence type="ECO:0000305" key="15">
    <source>
    </source>
</evidence>
<evidence type="ECO:0000312" key="16">
    <source>
        <dbReference type="EMBL" id="AAB36991.1"/>
    </source>
</evidence>
<evidence type="ECO:0000312" key="17">
    <source>
        <dbReference type="EMBL" id="CAA52003.1"/>
    </source>
</evidence>
<evidence type="ECO:0000312" key="18">
    <source>
        <dbReference type="EMBL" id="X69590"/>
    </source>
</evidence>
<evidence type="ECO:0000312" key="19">
    <source>
        <dbReference type="PDB" id="1F1M"/>
    </source>
</evidence>
<evidence type="ECO:0007829" key="20">
    <source>
        <dbReference type="PDB" id="1G5Z"/>
    </source>
</evidence>
<reference evidence="18" key="1">
    <citation type="journal article" date="1995" name="J. Clin. Microbiol.">
        <title>Molecular analysis of genes encoding outer surface protein C (OspC) of Borrelia burgdorferi sensu lato: relationship to ospA genotype and evidence of lateral gene exchange of ospC.</title>
        <authorList>
            <person name="Jauris-Heipke S."/>
            <person name="Liegl G."/>
            <person name="Preac-Mursic V."/>
            <person name="Roessler D."/>
            <person name="Schwab E."/>
            <person name="Soutschek E."/>
            <person name="Will G."/>
            <person name="Wilske B."/>
        </authorList>
    </citation>
    <scope>NUCLEOTIDE SEQUENCE [GENOMIC DNA]</scope>
    <source>
        <strain>WudI</strain>
    </source>
</reference>
<reference evidence="17" key="2">
    <citation type="journal article" date="1993" name="J. Clin. Microbiol.">
        <title>Polymorphism in ospC gene of Borrelia burgdorferi and immunoreactivity of OspC protein: implications for taxonomy and for use of OspC protein as a diagnostic antigen.</title>
        <authorList>
            <person name="Theisen M."/>
            <person name="Frederiksen B."/>
            <person name="Lebech A.M."/>
            <person name="Vuust J."/>
            <person name="Hansen K."/>
        </authorList>
    </citation>
    <scope>NUCLEOTIDE SEQUENCE [GENOMIC DNA] OF 1-205</scope>
    <source>
        <strain>DK26</strain>
    </source>
</reference>
<reference evidence="16" key="3">
    <citation type="journal article" date="1995" name="Mol. Microbiol.">
        <title>Evidence for lateral transfer and recombination in OspC variation in Lyme disease Borrelia.</title>
        <authorList>
            <person name="Livey I."/>
            <person name="Gibbs C.P."/>
            <person name="Schuster R."/>
            <person name="Dorner F."/>
        </authorList>
    </citation>
    <scope>NUCLEOTIDE SEQUENCE [GENOMIC DNA] OF 19-212</scope>
    <source>
        <strain>JSB</strain>
    </source>
</reference>
<reference key="4">
    <citation type="journal article" date="1996" name="J. Exp. Med.">
        <title>Direct demonstration of antigenic substitution of Borrelia burgdorferi ex vivo: exploration of the paradox of the early immune response to outer surface proteins A and C in Lyme disease.</title>
        <authorList>
            <person name="Montgomery R.R."/>
            <person name="Malawista S.E."/>
            <person name="Feen K.J."/>
            <person name="Bockenstedt L.K."/>
        </authorList>
    </citation>
    <scope>INDUCTION</scope>
    <source>
        <strain>N40</strain>
    </source>
</reference>
<reference key="5">
    <citation type="journal article" date="2004" name="J. Clin. Invest.">
        <title>OspC facilitates Borrelia burgdorferi invasion of Ixodes scapularis salivary glands.</title>
        <authorList>
            <person name="Pal U."/>
            <person name="Yang X."/>
            <person name="Chen M."/>
            <person name="Bockenstedt L.K."/>
            <person name="Anderson J.F."/>
            <person name="Flavell R.A."/>
            <person name="Norgard M.V."/>
            <person name="Fikrig E."/>
        </authorList>
    </citation>
    <scope>FUNCTION</scope>
    <scope>BINDS TO TICK SALIVARY GLANDS</scope>
    <scope>SUBCELLULAR LOCATION</scope>
    <scope>DISRUPTION PHENOTYPE</scope>
    <source>
        <strain>ATCC 53899 / 297</strain>
        <strain>N40</strain>
    </source>
</reference>
<reference key="6">
    <citation type="journal article" date="2005" name="Nature">
        <title>The Lyme disease agent exploits a tick protein to infect the mammalian host.</title>
        <authorList>
            <person name="Ramamoorthi N."/>
            <person name="Narasimhan S."/>
            <person name="Pal U."/>
            <person name="Bao F."/>
            <person name="Yang X.F."/>
            <person name="Fish D."/>
            <person name="Anguita J."/>
            <person name="Norgard M.V."/>
            <person name="Kantor F.S."/>
            <person name="Anderson J.F."/>
            <person name="Koski R.A."/>
            <person name="Fikrig E."/>
        </authorList>
    </citation>
    <scope>FUNCTION</scope>
    <scope>INTERACTION WITH I.SCAPULARIS SALP15</scope>
    <scope>DISRUPTION PHENOTYPE</scope>
    <source>
        <strain>ATCC 53899 / 297</strain>
        <strain>N40</strain>
    </source>
</reference>
<reference key="7">
    <citation type="journal article" date="2008" name="J. Infect. Dis.">
        <title>Preferential protection of Borrelia burgdorferi sensu stricto by a Salp15 homologue in Ixodes ricinus saliva.</title>
        <authorList>
            <person name="Hovius J.W."/>
            <person name="Schuijt T.J."/>
            <person name="de Groot K.A."/>
            <person name="Roelofs J.J."/>
            <person name="Oei G.A."/>
            <person name="Marquart J.A."/>
            <person name="de Beer R."/>
            <person name="van 't Veer C."/>
            <person name="van der Poll T."/>
            <person name="Ramamoorthi N."/>
            <person name="Fikrig E."/>
            <person name="van Dam A.P."/>
        </authorList>
    </citation>
    <scope>FUNCTION</scope>
    <scope>INTERACTION WITH I.RICINUS IRIC-1 AND I.SCAPULARIS SALP15</scope>
    <scope>DISRUPTION PHENOTYPE</scope>
    <scope>PROTECTS AGAINST MAMMALIAN IMMUNE SYSTEM</scope>
    <source>
        <strain>N40</strain>
    </source>
</reference>
<reference key="8">
    <citation type="journal article" date="2012" name="Infect. Immun.">
        <title>Detection of Established Virulence Genes and Plasmids To Differentiate Borrelia burgdorferi Strains.</title>
        <authorList>
            <person name="Chan K."/>
            <person name="Casjens S."/>
            <person name="Parveen N."/>
        </authorList>
    </citation>
    <scope>DERIVATION OF STRAIN N40</scope>
    <source>
        <strain>N40D10/E9</strain>
        <plasmid>cp26</plasmid>
    </source>
</reference>
<reference key="9">
    <citation type="journal article" date="2017" name="Cell. Microbiol.">
        <title>Borrelia burgdorferi outer surface protein C (OspC) binds complement component C4b and confers bloodstream survival.</title>
        <authorList>
            <person name="Caine J.A."/>
            <person name="Lin Y.P."/>
            <person name="Kessler J.R."/>
            <person name="Sato H."/>
            <person name="Leong J.M."/>
            <person name="Coburn J."/>
        </authorList>
    </citation>
    <scope>SUBCELLULAR LOCATION</scope>
    <source>
        <strain>N40D10/E9</strain>
    </source>
</reference>
<reference key="10">
    <citation type="journal article" date="2021" name="Cell. Microbiol.">
        <title>Corrigendum.</title>
        <authorList>
            <person name="Caine J.A."/>
            <person name="Lin Y.P."/>
            <person name="Kessler J.R."/>
            <person name="Sato H."/>
            <person name="Leong J.M."/>
            <person name="Coburn J."/>
        </authorList>
    </citation>
    <scope>ERRATUM OF PUBMED:28873507</scope>
</reference>
<reference evidence="19" key="11">
    <citation type="journal article" date="2001" name="EMBO J.">
        <title>Crystal structure of outer surface protein C (OspC) from the Lyme disease spirochete, Borrelia burgdorferi.</title>
        <authorList>
            <person name="Kumaran D."/>
            <person name="Eswaramoorthy S."/>
            <person name="Luft B.J."/>
            <person name="Koide S."/>
            <person name="Dunn J.J."/>
            <person name="Lawson C.L."/>
            <person name="Swaminathan S."/>
        </authorList>
    </citation>
    <scope>X-RAY CRYSTALLOGRAPHY (1.80 ANGSTROMS) OF 41-203</scope>
    <scope>SUBUNIT</scope>
    <source>
        <strain evidence="11">HB19</strain>
    </source>
</reference>
<reference evidence="20" key="12">
    <citation type="journal article" date="2001" name="J. Biol. Chem.">
        <title>Crystal structure of Lyme disease antigen outer surface protein C from Borrelia burgdorferi.</title>
        <authorList>
            <person name="Eicken C."/>
            <person name="Sharma V."/>
            <person name="Klabunde T."/>
            <person name="Owens R.T."/>
            <person name="Pikas D.S."/>
            <person name="Hook M."/>
            <person name="Sacchettini J.C."/>
        </authorList>
    </citation>
    <scope>X-RAY CRYSTALLOGRAPHY (2.51 ANGSTROMS) OF 41-206</scope>
    <scope>SUBUNIT</scope>
    <source>
        <strain>N40</strain>
    </source>
</reference>
<proteinExistence type="evidence at protein level"/>
<accession>P0DW54</accession>
<accession>Q08137</accession>
<accession>Q9S3P4</accession>
<geneLocation type="plasmid">
    <name>cp26</name>
</geneLocation>
<sequence>MKKNTLSAILMTLFLFISCNNSGKGGDSASTNPADESAKGPNLTEISKKITDSNAFVLAVKEVETLVLSIDELAKKAIGQKIDNNNGLAALNNQNGSLLAGAYAISTLITEKLSKLKNLEELKTEIAKAKKCSEEFTNKLKSGHADLGKQDATDDHAKAAILKTHATTDKGAKEFKDLFESVEGLLKAAQVALTNSVKELTSPVVAESPKKP</sequence>
<protein>
    <recommendedName>
        <fullName evidence="12">Outer surface protein C</fullName>
    </recommendedName>
</protein>
<comment type="function">
    <text evidence="1 5 6 7 12">Major immunodominant protein in mammalian hosts (PubMed:7665660). Required for initial stages of mammalian infection (PubMed:14722614). Exploits its interaction with Ixodes scapularis salivary protein 15 (Salp15) or its paralog I.ricinus Iric-1 to increase mammalian host infection. Binding of bacteria to Salp15 or Iric-1 protects them from antibody-mediated destruction in vitro, due to interaction with this protein (PubMed:16049492, PubMed:18752445). Preincubation with Salp15 or Iric-1 allows bacteria to infect mice that had already cleared a B.burgdorferi infection, showing it is important in bacterial colonization and dissemination (PubMed:16049492, PubMed:18752445). Decreasing Salp15 levels in ticks by RNAi leads to decreased bacterial presence in infected mice (PubMed:16049492). Inhibits macrophage-mediated phagocytosis of the bacteria. Binds human (host) plasminogen; this probably confers an extracellular protease activity on the bacteria that allows it to traverse host tissue (By similarity).</text>
</comment>
<comment type="subunit">
    <text evidence="1 3 4 5 6 7">Homodimer (PubMed:11139584, PubMed:11230121). Binds to tick salivary glands; antibodies against this protein cause a decrease in Borrelia movement to the tick salivary glands during host feeding (PubMed:14722614). Interacts with host Ixodes scapularis salivary protein 15 (Salp15) (PubMed:16049492, PubMed:18752445). Interacts with host I.ricinus salivary protein Iric-1 (PubMed:18752445). Binds human (host) plasminogen (By similarity).</text>
</comment>
<comment type="subcellular location">
    <subcellularLocation>
        <location evidence="14">Cell outer membrane</location>
        <topology evidence="2">Lipid-anchor</topology>
    </subcellularLocation>
    <subcellularLocation>
        <location evidence="5 9">Cell surface</location>
    </subcellularLocation>
</comment>
<comment type="induction">
    <text evidence="10">Poorly expressed in vitro in strain N40, expressed for a short time following mouse infection, then it disappears (at protein level).</text>
</comment>
<comment type="disruption phenotype">
    <text evidence="5 6 7">No change in ability to colonize the tick gut, greatly decreased migration to the tick salivary gland during feeding, about 800-fold reduction in transmission to mice (PubMed:14722614). No longer binds host I.scapularis Salp15 protein (strain ATCC 53899 / 297) (PubMed:16049492, PubMed:18752445).</text>
</comment>
<comment type="miscellaneous">
    <text evidence="13">The causative agent of Lyme disease, the bacteria has an enzootic lifestyle. Larval ticks are infected with bacteria during feeding on infected hosts (mostly mammals) which retain the bacteria during subsequent developmental stages. It is transmitted to the next host when it is bitten by ticks. During tick feeding (which can last for several days), bacterial migrate from the tick midgut to the salivary gland where they are transmitted to the host.</text>
</comment>
<comment type="miscellaneous">
    <text evidence="8 12">This gene is encoded on a 26 kb circular plasmid (cp26) in strains B31, N40 and B.afzelii strain PKo; it is probably encoded on cp26 in the other strains given here.</text>
</comment>
<comment type="miscellaneous">
    <text evidence="15">Strain N40 was originally isolated in 1988 from an I.scapularis tick in eastern New York state by D. Fish; the original tick may have been infected by multiple B.burgdorferi strains, giving rise to multiple, different 'N40' clones.</text>
</comment>
<comment type="similarity">
    <text evidence="13">Belongs to the OspC lipoprotein family.</text>
</comment>